<proteinExistence type="evidence at transcript level"/>
<name>WFDC2_RAT</name>
<accession>Q8CHN3</accession>
<accession>Q8CHN1</accession>
<gene>
    <name type="primary">Wfdc2</name>
</gene>
<feature type="signal peptide" evidence="2">
    <location>
        <begin position="1"/>
        <end position="30"/>
    </location>
</feature>
<feature type="chain" id="PRO_0000041374" description="WAP four-disulfide core domain protein 2">
    <location>
        <begin position="31"/>
        <end position="168"/>
    </location>
</feature>
<feature type="domain" description="WAP 1" evidence="3">
    <location>
        <begin position="31"/>
        <end position="74"/>
    </location>
</feature>
<feature type="domain" description="WAP 2" evidence="3">
    <location>
        <begin position="119"/>
        <end position="167"/>
    </location>
</feature>
<feature type="region of interest" description="Disordered" evidence="4">
    <location>
        <begin position="100"/>
        <end position="123"/>
    </location>
</feature>
<feature type="disulfide bond" evidence="3">
    <location>
        <begin position="36"/>
        <end position="62"/>
    </location>
</feature>
<feature type="disulfide bond" evidence="3">
    <location>
        <begin position="45"/>
        <end position="66"/>
    </location>
</feature>
<feature type="disulfide bond" evidence="3">
    <location>
        <begin position="49"/>
        <end position="61"/>
    </location>
</feature>
<feature type="disulfide bond" evidence="3">
    <location>
        <begin position="55"/>
        <end position="70"/>
    </location>
</feature>
<feature type="disulfide bond" evidence="3">
    <location>
        <begin position="126"/>
        <end position="154"/>
    </location>
</feature>
<feature type="disulfide bond" evidence="3">
    <location>
        <begin position="137"/>
        <end position="158"/>
    </location>
</feature>
<feature type="disulfide bond" evidence="3">
    <location>
        <begin position="141"/>
        <end position="153"/>
    </location>
</feature>
<feature type="disulfide bond" evidence="3">
    <location>
        <begin position="147"/>
        <end position="163"/>
    </location>
</feature>
<feature type="splice variant" id="VSP_007673" description="In isoform 2." evidence="5">
    <location>
        <begin position="27"/>
        <end position="74"/>
    </location>
</feature>
<comment type="function">
    <text evidence="1">Broad range protease inhibitor.</text>
</comment>
<comment type="subunit">
    <text evidence="1">Homotrimer; disulfide-linked.</text>
</comment>
<comment type="subcellular location">
    <subcellularLocation>
        <location evidence="1">Secreted</location>
    </subcellularLocation>
</comment>
<comment type="alternative products">
    <event type="alternative splicing"/>
    <isoform>
        <id>Q8CHN3-1</id>
        <name>1</name>
        <sequence type="displayed"/>
    </isoform>
    <isoform>
        <id>Q8CHN3-2</id>
        <name>2</name>
        <sequence type="described" ref="VSP_007673"/>
    </isoform>
</comment>
<reference key="1">
    <citation type="submission" date="2002-11" db="EMBL/GenBank/DDBJ databases">
        <title>Identification and characterization of rodent epididymal cDNAs by homology to human and canine counterparts.</title>
        <authorList>
            <person name="Kaeppler-Hanno K."/>
            <person name="Yeung C.H."/>
            <person name="Kascheike I."/>
            <person name="Kirchhoff C."/>
        </authorList>
    </citation>
    <scope>NUCLEOTIDE SEQUENCE [MRNA] (ISOFORMS 1 AND 2)</scope>
    <source>
        <strain>Sprague-Dawley</strain>
        <tissue>Epididymis</tissue>
    </source>
</reference>
<keyword id="KW-0025">Alternative splicing</keyword>
<keyword id="KW-0062">Aspartic protease inhibitor</keyword>
<keyword id="KW-1015">Disulfide bond</keyword>
<keyword id="KW-0646">Protease inhibitor</keyword>
<keyword id="KW-1185">Reference proteome</keyword>
<keyword id="KW-0677">Repeat</keyword>
<keyword id="KW-0964">Secreted</keyword>
<keyword id="KW-0722">Serine protease inhibitor</keyword>
<keyword id="KW-0732">Signal</keyword>
<keyword id="KW-0789">Thiol protease inhibitor</keyword>
<protein>
    <recommendedName>
        <fullName>WAP four-disulfide core domain protein 2</fullName>
    </recommendedName>
    <alternativeName>
        <fullName>Epididymal secretory protein 4</fullName>
        <shortName>RE4</shortName>
    </alternativeName>
</protein>
<sequence>MPACRLCLLATGLLLGLLLFTPLSATGTRAEKPGVCPQLEPITDCVKACILDNDCQDNYKCCQAGCGSVCSKPNGLSEGKLSRTATGTTTLSAGLARTSPLSRGQVSTKPPVVTKEGGNGEKQGTCPSVDFPKLGLCEDQCQMDSQCSGNMKCCRNGCGKMGCTTPKF</sequence>
<dbReference type="EMBL" id="AJ515239">
    <property type="protein sequence ID" value="CAD56201.1"/>
    <property type="molecule type" value="mRNA"/>
</dbReference>
<dbReference type="EMBL" id="AJ515241">
    <property type="protein sequence ID" value="CAD56203.1"/>
    <property type="molecule type" value="mRNA"/>
</dbReference>
<dbReference type="RefSeq" id="NP_775132.1">
    <molecule id="Q8CHN3-1"/>
    <property type="nucleotide sequence ID" value="NM_173109.2"/>
</dbReference>
<dbReference type="RefSeq" id="XP_038960329.1">
    <molecule id="Q8CHN3-2"/>
    <property type="nucleotide sequence ID" value="XM_039104401.2"/>
</dbReference>
<dbReference type="SMR" id="Q8CHN3"/>
<dbReference type="FunCoup" id="Q8CHN3">
    <property type="interactions" value="2"/>
</dbReference>
<dbReference type="STRING" id="10116.ENSRNOP00000019804"/>
<dbReference type="MEROPS" id="I17.004"/>
<dbReference type="PaxDb" id="10116-ENSRNOP00000019804"/>
<dbReference type="Ensembl" id="ENSRNOT00000110333.1">
    <molecule id="Q8CHN3-2"/>
    <property type="protein sequence ID" value="ENSRNOP00000077787.1"/>
    <property type="gene ID" value="ENSRNOG00000014739.9"/>
</dbReference>
<dbReference type="GeneID" id="286888"/>
<dbReference type="KEGG" id="rno:286888"/>
<dbReference type="UCSC" id="RGD:628757">
    <molecule id="Q8CHN3-1"/>
    <property type="organism name" value="rat"/>
</dbReference>
<dbReference type="AGR" id="RGD:628757"/>
<dbReference type="CTD" id="10406"/>
<dbReference type="RGD" id="628757">
    <property type="gene designation" value="Wfdc2"/>
</dbReference>
<dbReference type="VEuPathDB" id="HostDB:ENSRNOG00000014739"/>
<dbReference type="eggNOG" id="ENOG502SA8J">
    <property type="taxonomic scope" value="Eukaryota"/>
</dbReference>
<dbReference type="GeneTree" id="ENSGT00730000111410"/>
<dbReference type="HOGENOM" id="CLU_105901_3_0_1"/>
<dbReference type="InParanoid" id="Q8CHN3"/>
<dbReference type="PhylomeDB" id="Q8CHN3"/>
<dbReference type="PRO" id="PR:Q8CHN3"/>
<dbReference type="Proteomes" id="UP000002494">
    <property type="component" value="Chromosome 3"/>
</dbReference>
<dbReference type="Bgee" id="ENSRNOG00000014739">
    <property type="expression patterns" value="Expressed in lung and 19 other cell types or tissues"/>
</dbReference>
<dbReference type="GO" id="GO:0005615">
    <property type="term" value="C:extracellular space"/>
    <property type="evidence" value="ECO:0000318"/>
    <property type="project" value="GO_Central"/>
</dbReference>
<dbReference type="GO" id="GO:0019828">
    <property type="term" value="F:aspartic-type endopeptidase inhibitor activity"/>
    <property type="evidence" value="ECO:0000266"/>
    <property type="project" value="RGD"/>
</dbReference>
<dbReference type="GO" id="GO:0004869">
    <property type="term" value="F:cysteine-type endopeptidase inhibitor activity"/>
    <property type="evidence" value="ECO:0007669"/>
    <property type="project" value="UniProtKB-KW"/>
</dbReference>
<dbReference type="GO" id="GO:0004867">
    <property type="term" value="F:serine-type endopeptidase inhibitor activity"/>
    <property type="evidence" value="ECO:0000266"/>
    <property type="project" value="RGD"/>
</dbReference>
<dbReference type="GO" id="GO:0019731">
    <property type="term" value="P:antibacterial humoral response"/>
    <property type="evidence" value="ECO:0000318"/>
    <property type="project" value="GO_Central"/>
</dbReference>
<dbReference type="GO" id="GO:0045087">
    <property type="term" value="P:innate immune response"/>
    <property type="evidence" value="ECO:0000318"/>
    <property type="project" value="GO_Central"/>
</dbReference>
<dbReference type="CDD" id="cd00199">
    <property type="entry name" value="WAP"/>
    <property type="match status" value="1"/>
</dbReference>
<dbReference type="FunFam" id="4.10.75.10:FF:000001">
    <property type="entry name" value="Anosmin 1"/>
    <property type="match status" value="1"/>
</dbReference>
<dbReference type="Gene3D" id="4.10.75.10">
    <property type="entry name" value="Elafin-like"/>
    <property type="match status" value="2"/>
</dbReference>
<dbReference type="InterPro" id="IPR036645">
    <property type="entry name" value="Elafin-like_sf"/>
</dbReference>
<dbReference type="InterPro" id="IPR008197">
    <property type="entry name" value="WAP_dom"/>
</dbReference>
<dbReference type="InterPro" id="IPR050514">
    <property type="entry name" value="WAP_four-disulfide_core"/>
</dbReference>
<dbReference type="PANTHER" id="PTHR19441:SF34">
    <property type="entry name" value="WAP FOUR-DISULFIDE CORE DOMAIN PROTEIN 2"/>
    <property type="match status" value="1"/>
</dbReference>
<dbReference type="PANTHER" id="PTHR19441">
    <property type="entry name" value="WHEY ACDIC PROTEIN WAP"/>
    <property type="match status" value="1"/>
</dbReference>
<dbReference type="Pfam" id="PF00095">
    <property type="entry name" value="WAP"/>
    <property type="match status" value="2"/>
</dbReference>
<dbReference type="PRINTS" id="PR00003">
    <property type="entry name" value="4DISULPHCORE"/>
</dbReference>
<dbReference type="SMART" id="SM00217">
    <property type="entry name" value="WAP"/>
    <property type="match status" value="2"/>
</dbReference>
<dbReference type="SUPFAM" id="SSF57256">
    <property type="entry name" value="Elafin-like"/>
    <property type="match status" value="2"/>
</dbReference>
<dbReference type="PROSITE" id="PS51390">
    <property type="entry name" value="WAP"/>
    <property type="match status" value="2"/>
</dbReference>
<evidence type="ECO:0000250" key="1"/>
<evidence type="ECO:0000255" key="2"/>
<evidence type="ECO:0000255" key="3">
    <source>
        <dbReference type="PROSITE-ProRule" id="PRU00722"/>
    </source>
</evidence>
<evidence type="ECO:0000256" key="4">
    <source>
        <dbReference type="SAM" id="MobiDB-lite"/>
    </source>
</evidence>
<evidence type="ECO:0000303" key="5">
    <source ref="1"/>
</evidence>
<organism>
    <name type="scientific">Rattus norvegicus</name>
    <name type="common">Rat</name>
    <dbReference type="NCBI Taxonomy" id="10116"/>
    <lineage>
        <taxon>Eukaryota</taxon>
        <taxon>Metazoa</taxon>
        <taxon>Chordata</taxon>
        <taxon>Craniata</taxon>
        <taxon>Vertebrata</taxon>
        <taxon>Euteleostomi</taxon>
        <taxon>Mammalia</taxon>
        <taxon>Eutheria</taxon>
        <taxon>Euarchontoglires</taxon>
        <taxon>Glires</taxon>
        <taxon>Rodentia</taxon>
        <taxon>Myomorpha</taxon>
        <taxon>Muroidea</taxon>
        <taxon>Muridae</taxon>
        <taxon>Murinae</taxon>
        <taxon>Rattus</taxon>
    </lineage>
</organism>